<evidence type="ECO:0000250" key="1">
    <source>
        <dbReference type="UniProtKB" id="Q93QX2"/>
    </source>
</evidence>
<evidence type="ECO:0000255" key="2"/>
<evidence type="ECO:0000269" key="3">
    <source>
    </source>
</evidence>
<evidence type="ECO:0000303" key="4">
    <source>
    </source>
</evidence>
<evidence type="ECO:0000305" key="5"/>
<evidence type="ECO:0000312" key="6">
    <source>
        <dbReference type="EMBL" id="BAB98013.1"/>
    </source>
</evidence>
<proteinExistence type="inferred from homology"/>
<accession>Q8NSP8</accession>
<accession>Q6M7E4</accession>
<name>CRTEB_CORGL</name>
<reference key="1">
    <citation type="journal article" date="2003" name="Appl. Microbiol. Biotechnol.">
        <title>The Corynebacterium glutamicum genome: features and impacts on biotechnological processes.</title>
        <authorList>
            <person name="Ikeda M."/>
            <person name="Nakagawa S."/>
        </authorList>
    </citation>
    <scope>NUCLEOTIDE SEQUENCE [LARGE SCALE GENOMIC DNA]</scope>
    <source>
        <strain>ATCC 13032 / DSM 20300 / JCM 1318 / BCRC 11384 / CCUG 27702 / LMG 3730 / NBRC 12168 / NCIMB 10025 / NRRL B-2784 / 534</strain>
    </source>
</reference>
<reference key="2">
    <citation type="journal article" date="2012" name="BMC Microbiol.">
        <title>Carotenoid biosynthesis and overproduction in Corynebacterium glutamicum.</title>
        <authorList>
            <person name="Heider S.A."/>
            <person name="Peters-Wendisch P."/>
            <person name="Wendisch V.F."/>
        </authorList>
    </citation>
    <scope>FUNCTION</scope>
    <scope>PATHWAY</scope>
    <scope>DISRUPTION PHENOTYPE</scope>
    <source>
        <strain>ATCC 13032 / DSM 20300 / JCM 1318 / BCRC 11384 / CCUG 27702 / LMG 3730 / NBRC 12168 / NCIMB 10025 / NRRL B-2784 / 534</strain>
    </source>
</reference>
<feature type="chain" id="PRO_0000450584" description="Lycopene elongase/hydratase">
    <location>
        <begin position="1"/>
        <end position="287"/>
    </location>
</feature>
<feature type="transmembrane region" description="Helical" evidence="2">
    <location>
        <begin position="15"/>
        <end position="35"/>
    </location>
</feature>
<feature type="transmembrane region" description="Helical" evidence="2">
    <location>
        <begin position="37"/>
        <end position="57"/>
    </location>
</feature>
<feature type="transmembrane region" description="Helical" evidence="2">
    <location>
        <begin position="87"/>
        <end position="107"/>
    </location>
</feature>
<feature type="transmembrane region" description="Helical" evidence="2">
    <location>
        <begin position="137"/>
        <end position="157"/>
    </location>
</feature>
<feature type="transmembrane region" description="Helical" evidence="2">
    <location>
        <begin position="166"/>
        <end position="186"/>
    </location>
</feature>
<feature type="transmembrane region" description="Helical" evidence="2">
    <location>
        <begin position="218"/>
        <end position="238"/>
    </location>
</feature>
<feature type="transmembrane region" description="Helical" evidence="2">
    <location>
        <begin position="265"/>
        <end position="285"/>
    </location>
</feature>
<comment type="function">
    <text evidence="1 3">Catalyzes the elongation of the C(40) carotenoid all-trans-lycopene to the acyclic C(50) carotenoid flavuxanthin during decaprenoxanthin biosynthesis (PubMed:22963379). Acts as a bifunctional enzyme that catalyzes the elongation of lycopene by attaching a C(5) isoprene unit at C-2, as well as the hydroxylation of the new isoprene unit. The enzyme acts at both ends of the substrate, forming the C(50) carotenoid flavuxanthin via the C(45) intermediate nonaflavuxanthin (By similarity).</text>
</comment>
<comment type="catalytic activity">
    <reaction evidence="1">
        <text>all-trans-lycopene + dimethylallyl diphosphate + A + H2O = nonaflavuxanthin + AH2 + diphosphate</text>
        <dbReference type="Rhea" id="RHEA:56124"/>
        <dbReference type="ChEBI" id="CHEBI:13193"/>
        <dbReference type="ChEBI" id="CHEBI:15377"/>
        <dbReference type="ChEBI" id="CHEBI:15948"/>
        <dbReference type="ChEBI" id="CHEBI:17499"/>
        <dbReference type="ChEBI" id="CHEBI:33019"/>
        <dbReference type="ChEBI" id="CHEBI:57623"/>
        <dbReference type="ChEBI" id="CHEBI:139514"/>
        <dbReference type="EC" id="2.5.1.149"/>
    </reaction>
</comment>
<comment type="catalytic activity">
    <reaction evidence="1">
        <text>nonaflavuxanthin + dimethylallyl diphosphate + A + H2O = flavuxanthin + AH2 + diphosphate</text>
        <dbReference type="Rhea" id="RHEA:56128"/>
        <dbReference type="ChEBI" id="CHEBI:13193"/>
        <dbReference type="ChEBI" id="CHEBI:15377"/>
        <dbReference type="ChEBI" id="CHEBI:17499"/>
        <dbReference type="ChEBI" id="CHEBI:33019"/>
        <dbReference type="ChEBI" id="CHEBI:57623"/>
        <dbReference type="ChEBI" id="CHEBI:139514"/>
        <dbReference type="ChEBI" id="CHEBI:139515"/>
        <dbReference type="EC" id="2.5.1.149"/>
    </reaction>
</comment>
<comment type="pathway">
    <text evidence="3">Carotenoid biosynthesis.</text>
</comment>
<comment type="subcellular location">
    <subcellularLocation>
        <location evidence="5">Cell membrane</location>
        <topology evidence="2">Multi-pass membrane protein</topology>
    </subcellularLocation>
</comment>
<comment type="disruption phenotype">
    <text evidence="3">Mutant accumulates lycopene and cannot produce neither flavuxanthin nor decaprenoxanthin.</text>
</comment>
<comment type="similarity">
    <text evidence="5">Belongs to the UbiA prenyltransferase family.</text>
</comment>
<dbReference type="EC" id="2.5.1.149" evidence="1"/>
<dbReference type="EMBL" id="BA000036">
    <property type="protein sequence ID" value="BAB98013.1"/>
    <property type="molecule type" value="Genomic_DNA"/>
</dbReference>
<dbReference type="RefSeq" id="NP_599855.1">
    <property type="nucleotide sequence ID" value="NC_003450.3"/>
</dbReference>
<dbReference type="RefSeq" id="WP_011013770.1">
    <property type="nucleotide sequence ID" value="NC_006958.1"/>
</dbReference>
<dbReference type="STRING" id="196627.cg0717"/>
<dbReference type="KEGG" id="cgb:cg0717"/>
<dbReference type="KEGG" id="cgl:Cgl0620"/>
<dbReference type="PATRIC" id="fig|196627.13.peg.610"/>
<dbReference type="eggNOG" id="COG0382">
    <property type="taxonomic scope" value="Bacteria"/>
</dbReference>
<dbReference type="HOGENOM" id="CLU_058976_1_0_11"/>
<dbReference type="OrthoDB" id="1416782at2"/>
<dbReference type="BioCyc" id="CORYNE:G18NG-10182-MONOMER"/>
<dbReference type="Proteomes" id="UP000000582">
    <property type="component" value="Chromosome"/>
</dbReference>
<dbReference type="GO" id="GO:0005886">
    <property type="term" value="C:plasma membrane"/>
    <property type="evidence" value="ECO:0007669"/>
    <property type="project" value="UniProtKB-SubCell"/>
</dbReference>
<dbReference type="GO" id="GO:0016765">
    <property type="term" value="F:transferase activity, transferring alkyl or aryl (other than methyl) groups"/>
    <property type="evidence" value="ECO:0007669"/>
    <property type="project" value="InterPro"/>
</dbReference>
<dbReference type="CDD" id="cd13966">
    <property type="entry name" value="PT_UbiA_4"/>
    <property type="match status" value="1"/>
</dbReference>
<dbReference type="Gene3D" id="1.10.357.140">
    <property type="entry name" value="UbiA prenyltransferase"/>
    <property type="match status" value="1"/>
</dbReference>
<dbReference type="Gene3D" id="1.20.120.1780">
    <property type="entry name" value="UbiA prenyltransferase"/>
    <property type="match status" value="1"/>
</dbReference>
<dbReference type="InterPro" id="IPR050475">
    <property type="entry name" value="Prenyltransferase_related"/>
</dbReference>
<dbReference type="InterPro" id="IPR000537">
    <property type="entry name" value="UbiA_prenyltransferase"/>
</dbReference>
<dbReference type="InterPro" id="IPR044878">
    <property type="entry name" value="UbiA_sf"/>
</dbReference>
<dbReference type="NCBIfam" id="NF009608">
    <property type="entry name" value="PRK13105.1"/>
    <property type="match status" value="1"/>
</dbReference>
<dbReference type="PANTHER" id="PTHR42723">
    <property type="entry name" value="CHLOROPHYLL SYNTHASE"/>
    <property type="match status" value="1"/>
</dbReference>
<dbReference type="PANTHER" id="PTHR42723:SF1">
    <property type="entry name" value="CHLOROPHYLL SYNTHASE, CHLOROPLASTIC"/>
    <property type="match status" value="1"/>
</dbReference>
<dbReference type="Pfam" id="PF01040">
    <property type="entry name" value="UbiA"/>
    <property type="match status" value="1"/>
</dbReference>
<organism>
    <name type="scientific">Corynebacterium glutamicum (strain ATCC 13032 / DSM 20300 / JCM 1318 / BCRC 11384 / CCUG 27702 / LMG 3730 / NBRC 12168 / NCIMB 10025 / NRRL B-2784 / 534)</name>
    <dbReference type="NCBI Taxonomy" id="196627"/>
    <lineage>
        <taxon>Bacteria</taxon>
        <taxon>Bacillati</taxon>
        <taxon>Actinomycetota</taxon>
        <taxon>Actinomycetes</taxon>
        <taxon>Mycobacteriales</taxon>
        <taxon>Corynebacteriaceae</taxon>
        <taxon>Corynebacterium</taxon>
    </lineage>
</organism>
<keyword id="KW-1003">Cell membrane</keyword>
<keyword id="KW-0472">Membrane</keyword>
<keyword id="KW-1185">Reference proteome</keyword>
<keyword id="KW-0808">Transferase</keyword>
<keyword id="KW-0812">Transmembrane</keyword>
<keyword id="KW-1133">Transmembrane helix</keyword>
<gene>
    <name evidence="4" type="primary">crtEb</name>
    <name evidence="6" type="ordered locus">Cgl0620</name>
</gene>
<sequence length="287" mass="31705">MMEKIRLILLSSRPISWINTAYPFGLAYLLNAGEIDWLFWLGIVFFLIPYNIAMYGINDVFDYESDMRNPRKGGVEGAVLPKSSHSTLLWASAISTIPFLVILFIFGTWMSSLWLTLSVLAVIAYSAPKLRFKERPFIDALTSSTHFTSPALIGATITGTSPSAAMWIALGSFFLWGMASQILGAVQDVNADREANLSSIATVIGARGAIRLSVVLYLLAAVLVTTLPNPAWIIGIAILTYVFNAARFWNITDASCEQANRSWKVFLWLNYFVGAVITILLIAIHQI</sequence>
<protein>
    <recommendedName>
        <fullName evidence="5">Lycopene elongase/hydratase</fullName>
        <ecNumber evidence="1">2.5.1.149</ecNumber>
    </recommendedName>
</protein>